<feature type="transit peptide" description="Chloroplast" evidence="2">
    <location>
        <begin position="1"/>
        <end position="36"/>
    </location>
</feature>
<feature type="chain" id="PRO_0000141097" description="Ribose-phosphate pyrophosphokinase 1, chloroplastic">
    <location>
        <begin position="37"/>
        <end position="396"/>
    </location>
</feature>
<feature type="region of interest" description="Binding of phosphoribosylpyrophosphate" evidence="2">
    <location>
        <begin position="290"/>
        <end position="305"/>
    </location>
</feature>
<feature type="binding site" evidence="1">
    <location>
        <position position="204"/>
    </location>
    <ligand>
        <name>Mg(2+)</name>
        <dbReference type="ChEBI" id="CHEBI:18420"/>
    </ligand>
</feature>
<feature type="binding site" evidence="1">
    <location>
        <position position="206"/>
    </location>
    <ligand>
        <name>Mg(2+)</name>
        <dbReference type="ChEBI" id="CHEBI:18420"/>
    </ligand>
</feature>
<feature type="binding site" evidence="1">
    <location>
        <position position="215"/>
    </location>
    <ligand>
        <name>Mg(2+)</name>
        <dbReference type="ChEBI" id="CHEBI:18420"/>
    </ligand>
</feature>
<feature type="binding site" evidence="1">
    <location>
        <position position="219"/>
    </location>
    <ligand>
        <name>Mg(2+)</name>
        <dbReference type="ChEBI" id="CHEBI:18420"/>
    </ligand>
</feature>
<feature type="splice variant" id="VSP_013703" description="In isoform 2." evidence="3">
    <location>
        <begin position="194"/>
        <end position="224"/>
    </location>
</feature>
<gene>
    <name type="ordered locus">Os02g0127700</name>
    <name type="ordered locus">LOC_Os02g03540</name>
    <name type="ORF">P0482F12.28-1</name>
    <name type="ORF">P0482F12.28-2</name>
    <name type="ORF">P0576F08.1-1</name>
    <name type="ORF">P0576F08.1-2</name>
</gene>
<dbReference type="EC" id="2.7.6.1"/>
<dbReference type="EMBL" id="AP004886">
    <property type="protein sequence ID" value="BAD07971.1"/>
    <property type="molecule type" value="Genomic_DNA"/>
</dbReference>
<dbReference type="EMBL" id="AP004886">
    <property type="protein sequence ID" value="BAD07972.1"/>
    <property type="molecule type" value="Genomic_DNA"/>
</dbReference>
<dbReference type="EMBL" id="AP005311">
    <property type="protein sequence ID" value="BAD08028.1"/>
    <property type="molecule type" value="Genomic_DNA"/>
</dbReference>
<dbReference type="EMBL" id="AP005311">
    <property type="protein sequence ID" value="BAD08029.1"/>
    <property type="molecule type" value="Genomic_DNA"/>
</dbReference>
<dbReference type="EMBL" id="AP008208">
    <property type="protein sequence ID" value="BAF07677.1"/>
    <property type="molecule type" value="Genomic_DNA"/>
</dbReference>
<dbReference type="EMBL" id="AP014958">
    <property type="protein sequence ID" value="BAS76781.1"/>
    <property type="molecule type" value="Genomic_DNA"/>
</dbReference>
<dbReference type="EMBL" id="AK060422">
    <property type="protein sequence ID" value="BAG87440.1"/>
    <property type="molecule type" value="mRNA"/>
</dbReference>
<dbReference type="EMBL" id="AK072096">
    <property type="status" value="NOT_ANNOTATED_CDS"/>
    <property type="molecule type" value="mRNA"/>
</dbReference>
<dbReference type="EMBL" id="AK099092">
    <property type="protein sequence ID" value="BAG93919.1"/>
    <property type="molecule type" value="mRNA"/>
</dbReference>
<dbReference type="RefSeq" id="XP_015623376.1">
    <property type="nucleotide sequence ID" value="XM_015767890.1"/>
</dbReference>
<dbReference type="SMR" id="Q6Z2L5"/>
<dbReference type="FunCoup" id="Q6Z2L5">
    <property type="interactions" value="2793"/>
</dbReference>
<dbReference type="STRING" id="39947.Q6Z2L5"/>
<dbReference type="PaxDb" id="39947-Q6Z2L5"/>
<dbReference type="EnsemblPlants" id="Os02t0127700-02">
    <molecule id="Q6Z2L5-1"/>
    <property type="protein sequence ID" value="Os02t0127700-02"/>
    <property type="gene ID" value="Os02g0127700"/>
</dbReference>
<dbReference type="Gramene" id="Os02t0127700-02">
    <molecule id="Q6Z2L5-1"/>
    <property type="protein sequence ID" value="Os02t0127700-02"/>
    <property type="gene ID" value="Os02g0127700"/>
</dbReference>
<dbReference type="KEGG" id="dosa:Os02g0127700"/>
<dbReference type="eggNOG" id="KOG1448">
    <property type="taxonomic scope" value="Eukaryota"/>
</dbReference>
<dbReference type="HOGENOM" id="CLU_033546_7_0_1"/>
<dbReference type="InParanoid" id="Q6Z2L5"/>
<dbReference type="OMA" id="YFGWARQ"/>
<dbReference type="OrthoDB" id="413572at2759"/>
<dbReference type="PlantReactome" id="R-OSA-1119278">
    <property type="pathway name" value="PRPP biosynthesis I"/>
</dbReference>
<dbReference type="Proteomes" id="UP000000763">
    <property type="component" value="Chromosome 2"/>
</dbReference>
<dbReference type="Proteomes" id="UP000059680">
    <property type="component" value="Chromosome 2"/>
</dbReference>
<dbReference type="ExpressionAtlas" id="Q6Z2L5">
    <property type="expression patterns" value="baseline and differential"/>
</dbReference>
<dbReference type="GO" id="GO:0009507">
    <property type="term" value="C:chloroplast"/>
    <property type="evidence" value="ECO:0007669"/>
    <property type="project" value="UniProtKB-SubCell"/>
</dbReference>
<dbReference type="GO" id="GO:0005737">
    <property type="term" value="C:cytoplasm"/>
    <property type="evidence" value="ECO:0000318"/>
    <property type="project" value="GO_Central"/>
</dbReference>
<dbReference type="GO" id="GO:0002189">
    <property type="term" value="C:ribose phosphate diphosphokinase complex"/>
    <property type="evidence" value="ECO:0000318"/>
    <property type="project" value="GO_Central"/>
</dbReference>
<dbReference type="GO" id="GO:0005524">
    <property type="term" value="F:ATP binding"/>
    <property type="evidence" value="ECO:0007669"/>
    <property type="project" value="UniProtKB-KW"/>
</dbReference>
<dbReference type="GO" id="GO:0016301">
    <property type="term" value="F:kinase activity"/>
    <property type="evidence" value="ECO:0007669"/>
    <property type="project" value="UniProtKB-KW"/>
</dbReference>
<dbReference type="GO" id="GO:0000287">
    <property type="term" value="F:magnesium ion binding"/>
    <property type="evidence" value="ECO:0007669"/>
    <property type="project" value="InterPro"/>
</dbReference>
<dbReference type="GO" id="GO:0004749">
    <property type="term" value="F:ribose phosphate diphosphokinase activity"/>
    <property type="evidence" value="ECO:0000318"/>
    <property type="project" value="GO_Central"/>
</dbReference>
<dbReference type="GO" id="GO:0006015">
    <property type="term" value="P:5-phosphoribose 1-diphosphate biosynthetic process"/>
    <property type="evidence" value="ECO:0000318"/>
    <property type="project" value="GO_Central"/>
</dbReference>
<dbReference type="GO" id="GO:0006164">
    <property type="term" value="P:purine nucleotide biosynthetic process"/>
    <property type="evidence" value="ECO:0000318"/>
    <property type="project" value="GO_Central"/>
</dbReference>
<dbReference type="GO" id="GO:0009156">
    <property type="term" value="P:ribonucleoside monophosphate biosynthetic process"/>
    <property type="evidence" value="ECO:0007669"/>
    <property type="project" value="InterPro"/>
</dbReference>
<dbReference type="CDD" id="cd06223">
    <property type="entry name" value="PRTases_typeI"/>
    <property type="match status" value="1"/>
</dbReference>
<dbReference type="FunFam" id="3.40.50.2020:FF:000007">
    <property type="entry name" value="Ribose-phosphate pyrophosphokinase"/>
    <property type="match status" value="1"/>
</dbReference>
<dbReference type="Gene3D" id="3.40.50.2020">
    <property type="match status" value="2"/>
</dbReference>
<dbReference type="HAMAP" id="MF_00583_B">
    <property type="entry name" value="RibP_PPkinase_B"/>
    <property type="match status" value="1"/>
</dbReference>
<dbReference type="InterPro" id="IPR000842">
    <property type="entry name" value="PRib_PP_synth_CS"/>
</dbReference>
<dbReference type="InterPro" id="IPR029099">
    <property type="entry name" value="Pribosyltran_N"/>
</dbReference>
<dbReference type="InterPro" id="IPR000836">
    <property type="entry name" value="PRibTrfase_dom"/>
</dbReference>
<dbReference type="InterPro" id="IPR029057">
    <property type="entry name" value="PRTase-like"/>
</dbReference>
<dbReference type="InterPro" id="IPR005946">
    <property type="entry name" value="Rib-P_diPkinase"/>
</dbReference>
<dbReference type="InterPro" id="IPR037515">
    <property type="entry name" value="Rib-P_diPkinase_bac"/>
</dbReference>
<dbReference type="NCBIfam" id="NF002320">
    <property type="entry name" value="PRK01259.1"/>
    <property type="match status" value="1"/>
</dbReference>
<dbReference type="NCBIfam" id="NF002758">
    <property type="entry name" value="PRK02812.1"/>
    <property type="match status" value="1"/>
</dbReference>
<dbReference type="NCBIfam" id="TIGR01251">
    <property type="entry name" value="ribP_PPkin"/>
    <property type="match status" value="1"/>
</dbReference>
<dbReference type="PANTHER" id="PTHR10210">
    <property type="entry name" value="RIBOSE-PHOSPHATE DIPHOSPHOKINASE FAMILY MEMBER"/>
    <property type="match status" value="1"/>
</dbReference>
<dbReference type="PANTHER" id="PTHR10210:SF120">
    <property type="entry name" value="RIBOSE-PHOSPHATE PYROPHOSPHOKINASE 5, CHLOROPLASTIC"/>
    <property type="match status" value="1"/>
</dbReference>
<dbReference type="Pfam" id="PF14572">
    <property type="entry name" value="Pribosyl_synth"/>
    <property type="match status" value="1"/>
</dbReference>
<dbReference type="Pfam" id="PF13793">
    <property type="entry name" value="Pribosyltran_N"/>
    <property type="match status" value="1"/>
</dbReference>
<dbReference type="SMART" id="SM01400">
    <property type="entry name" value="Pribosyltran_N"/>
    <property type="match status" value="1"/>
</dbReference>
<dbReference type="SUPFAM" id="SSF53271">
    <property type="entry name" value="PRTase-like"/>
    <property type="match status" value="1"/>
</dbReference>
<dbReference type="PROSITE" id="PS00114">
    <property type="entry name" value="PRPP_SYNTHASE"/>
    <property type="match status" value="1"/>
</dbReference>
<proteinExistence type="evidence at transcript level"/>
<evidence type="ECO:0000250" key="1"/>
<evidence type="ECO:0000255" key="2"/>
<evidence type="ECO:0000303" key="3">
    <source>
    </source>
</evidence>
<evidence type="ECO:0000305" key="4"/>
<organism>
    <name type="scientific">Oryza sativa subsp. japonica</name>
    <name type="common">Rice</name>
    <dbReference type="NCBI Taxonomy" id="39947"/>
    <lineage>
        <taxon>Eukaryota</taxon>
        <taxon>Viridiplantae</taxon>
        <taxon>Streptophyta</taxon>
        <taxon>Embryophyta</taxon>
        <taxon>Tracheophyta</taxon>
        <taxon>Spermatophyta</taxon>
        <taxon>Magnoliopsida</taxon>
        <taxon>Liliopsida</taxon>
        <taxon>Poales</taxon>
        <taxon>Poaceae</taxon>
        <taxon>BOP clade</taxon>
        <taxon>Oryzoideae</taxon>
        <taxon>Oryzeae</taxon>
        <taxon>Oryzinae</taxon>
        <taxon>Oryza</taxon>
        <taxon>Oryza sativa</taxon>
    </lineage>
</organism>
<protein>
    <recommendedName>
        <fullName>Ribose-phosphate pyrophosphokinase 1, chloroplastic</fullName>
        <ecNumber>2.7.6.1</ecNumber>
    </recommendedName>
    <alternativeName>
        <fullName>Phosphoribosyl pyrophosphate synthase 1</fullName>
    </alternativeName>
</protein>
<comment type="catalytic activity">
    <reaction>
        <text>D-ribose 5-phosphate + ATP = 5-phospho-alpha-D-ribose 1-diphosphate + AMP + H(+)</text>
        <dbReference type="Rhea" id="RHEA:15609"/>
        <dbReference type="ChEBI" id="CHEBI:15378"/>
        <dbReference type="ChEBI" id="CHEBI:30616"/>
        <dbReference type="ChEBI" id="CHEBI:58017"/>
        <dbReference type="ChEBI" id="CHEBI:78346"/>
        <dbReference type="ChEBI" id="CHEBI:456215"/>
        <dbReference type="EC" id="2.7.6.1"/>
    </reaction>
</comment>
<comment type="cofactor">
    <cofactor evidence="1">
        <name>Mg(2+)</name>
        <dbReference type="ChEBI" id="CHEBI:18420"/>
    </cofactor>
    <text evidence="1">Binds 1 Mg(2+) ion per subunit.</text>
</comment>
<comment type="subcellular location">
    <subcellularLocation>
        <location evidence="4">Plastid</location>
        <location evidence="4">Chloroplast</location>
    </subcellularLocation>
</comment>
<comment type="alternative products">
    <event type="alternative splicing"/>
    <isoform>
        <id>Q6Z2L5-1</id>
        <name>1</name>
        <sequence type="displayed"/>
    </isoform>
    <isoform>
        <id>Q6Z2L5-2</id>
        <name>2</name>
        <sequence type="described" ref="VSP_013703"/>
    </isoform>
</comment>
<comment type="similarity">
    <text evidence="4">Belongs to the ribose-phosphate pyrophosphokinase family.</text>
</comment>
<sequence>MPLSYSAAAAAAPSPLAARSRGLLRRPPRSSPVVVRCKKIDQLRAVNGIPPYAPVSNRSLLSPVTLPIIRDANIKNDTRLRIFSGTANPSLSQEIASYLGLELGKINIKRFADGEIYVQLQESVRGCDVFLVQPTCPPANENLMELLIMIDACRRASAKNITAVIPYFGYARADRKSQGRESIAAKLVANMITEAGANRVLVCDLHSSQAMGYFDIPVDHVYGQPVILDYLASKTICSDDLVVVSPDVGGVARARAFAKKLSDAPLAIVDKRRHGHNVAEVMNLIGDVRGKVAVMMDDMIDTAGTIAKGAELLHQEGAREVYACCTHAVFSPPAIERLSSGLFQEVIITNTIPLKEDKSFPQLTILSVANLLGETIWRVHDDCSVGHEPYSSLDID</sequence>
<reference key="1">
    <citation type="journal article" date="2005" name="Nature">
        <title>The map-based sequence of the rice genome.</title>
        <authorList>
            <consortium name="International rice genome sequencing project (IRGSP)"/>
        </authorList>
    </citation>
    <scope>NUCLEOTIDE SEQUENCE [LARGE SCALE GENOMIC DNA]</scope>
    <source>
        <strain>cv. Nipponbare</strain>
    </source>
</reference>
<reference key="2">
    <citation type="journal article" date="2008" name="Nucleic Acids Res.">
        <title>The rice annotation project database (RAP-DB): 2008 update.</title>
        <authorList>
            <consortium name="The rice annotation project (RAP)"/>
        </authorList>
    </citation>
    <scope>GENOME REANNOTATION</scope>
    <source>
        <strain>cv. Nipponbare</strain>
    </source>
</reference>
<reference key="3">
    <citation type="journal article" date="2013" name="Rice">
        <title>Improvement of the Oryza sativa Nipponbare reference genome using next generation sequence and optical map data.</title>
        <authorList>
            <person name="Kawahara Y."/>
            <person name="de la Bastide M."/>
            <person name="Hamilton J.P."/>
            <person name="Kanamori H."/>
            <person name="McCombie W.R."/>
            <person name="Ouyang S."/>
            <person name="Schwartz D.C."/>
            <person name="Tanaka T."/>
            <person name="Wu J."/>
            <person name="Zhou S."/>
            <person name="Childs K.L."/>
            <person name="Davidson R.M."/>
            <person name="Lin H."/>
            <person name="Quesada-Ocampo L."/>
            <person name="Vaillancourt B."/>
            <person name="Sakai H."/>
            <person name="Lee S.S."/>
            <person name="Kim J."/>
            <person name="Numa H."/>
            <person name="Itoh T."/>
            <person name="Buell C.R."/>
            <person name="Matsumoto T."/>
        </authorList>
    </citation>
    <scope>GENOME REANNOTATION</scope>
    <source>
        <strain>cv. Nipponbare</strain>
    </source>
</reference>
<reference key="4">
    <citation type="journal article" date="2003" name="Science">
        <title>Collection, mapping, and annotation of over 28,000 cDNA clones from japonica rice.</title>
        <authorList>
            <consortium name="The rice full-length cDNA consortium"/>
        </authorList>
    </citation>
    <scope>NUCLEOTIDE SEQUENCE [LARGE SCALE MRNA] (ISOFORMS 1 AND 2)</scope>
    <source>
        <strain>cv. Nipponbare</strain>
    </source>
</reference>
<keyword id="KW-0025">Alternative splicing</keyword>
<keyword id="KW-0067">ATP-binding</keyword>
<keyword id="KW-0150">Chloroplast</keyword>
<keyword id="KW-0418">Kinase</keyword>
<keyword id="KW-0460">Magnesium</keyword>
<keyword id="KW-0479">Metal-binding</keyword>
<keyword id="KW-0545">Nucleotide biosynthesis</keyword>
<keyword id="KW-0547">Nucleotide-binding</keyword>
<keyword id="KW-0934">Plastid</keyword>
<keyword id="KW-1185">Reference proteome</keyword>
<keyword id="KW-0808">Transferase</keyword>
<keyword id="KW-0809">Transit peptide</keyword>
<accession>Q6Z2L5</accession>
<accession>Q0E4B1</accession>
<accession>Q6Z2L6</accession>
<name>KPRS1_ORYSJ</name>